<gene>
    <name type="primary">impA</name>
</gene>
<reference key="1">
    <citation type="journal article" date="1999" name="Infect. Immun.">
        <title>The virulence plasmid-encoded impCAB operon enhances survival and induced mutagenesis in Shigella flexneri after exposure to UV radiation.</title>
        <authorList>
            <person name="Runyen-Janecky L.J."/>
            <person name="Hong M."/>
            <person name="Payne S.M."/>
        </authorList>
    </citation>
    <scope>NUCLEOTIDE SEQUENCE [GENOMIC DNA]</scope>
    <source>
        <strain>SA100 / Serotype 2a</strain>
    </source>
</reference>
<keyword id="KW-0068">Autocatalytic cleavage</keyword>
<keyword id="KW-0227">DNA damage</keyword>
<keyword id="KW-0234">DNA repair</keyword>
<keyword id="KW-0378">Hydrolase</keyword>
<keyword id="KW-0614">Plasmid</keyword>
<keyword id="KW-0645">Protease</keyword>
<keyword id="KW-0720">Serine protease</keyword>
<keyword id="KW-0741">SOS mutagenesis</keyword>
<keyword id="KW-0742">SOS response</keyword>
<feature type="chain" id="PRO_0000252116" description="Protein ImpA">
    <location>
        <begin position="1"/>
        <end position="145"/>
    </location>
</feature>
<feature type="chain" id="PRO_0000252117" description="Protein ImpA'">
    <location>
        <begin position="29"/>
        <end position="145"/>
    </location>
</feature>
<feature type="active site" description="For autocatalytic cleavage activity" evidence="1">
    <location>
        <position position="64"/>
    </location>
</feature>
<feature type="active site" description="For autocatalytic cleavage activity" evidence="1">
    <location>
        <position position="101"/>
    </location>
</feature>
<feature type="site" description="Cleavage; by autolysis" evidence="1">
    <location>
        <begin position="28"/>
        <end position="29"/>
    </location>
</feature>
<accession>Q7BSM9</accession>
<name>IMPA_SHIFL</name>
<evidence type="ECO:0000250" key="1"/>
<evidence type="ECO:0000305" key="2"/>
<proteinExistence type="inferred from homology"/>
<comment type="function">
    <text evidence="1">Involved in UV protection and mutation.</text>
</comment>
<comment type="similarity">
    <text evidence="2">Belongs to the peptidase S24 family.</text>
</comment>
<geneLocation type="plasmid">
    <name>90 kb virulence</name>
</geneLocation>
<dbReference type="EC" id="3.4.21.-"/>
<dbReference type="EMBL" id="AF079316">
    <property type="protein sequence ID" value="AAD03592.1"/>
    <property type="molecule type" value="Genomic_DNA"/>
</dbReference>
<dbReference type="SMR" id="Q7BSM9"/>
<dbReference type="MEROPS" id="S24.003"/>
<dbReference type="GO" id="GO:0003677">
    <property type="term" value="F:DNA binding"/>
    <property type="evidence" value="ECO:0007669"/>
    <property type="project" value="InterPro"/>
</dbReference>
<dbReference type="GO" id="GO:0008236">
    <property type="term" value="F:serine-type peptidase activity"/>
    <property type="evidence" value="ECO:0007669"/>
    <property type="project" value="UniProtKB-KW"/>
</dbReference>
<dbReference type="GO" id="GO:0006281">
    <property type="term" value="P:DNA repair"/>
    <property type="evidence" value="ECO:0007669"/>
    <property type="project" value="UniProtKB-KW"/>
</dbReference>
<dbReference type="GO" id="GO:0006508">
    <property type="term" value="P:proteolysis"/>
    <property type="evidence" value="ECO:0007669"/>
    <property type="project" value="UniProtKB-KW"/>
</dbReference>
<dbReference type="GO" id="GO:0006355">
    <property type="term" value="P:regulation of DNA-templated transcription"/>
    <property type="evidence" value="ECO:0007669"/>
    <property type="project" value="InterPro"/>
</dbReference>
<dbReference type="GO" id="GO:0009432">
    <property type="term" value="P:SOS response"/>
    <property type="evidence" value="ECO:0007669"/>
    <property type="project" value="UniProtKB-KW"/>
</dbReference>
<dbReference type="CDD" id="cd06529">
    <property type="entry name" value="S24_LexA-like"/>
    <property type="match status" value="1"/>
</dbReference>
<dbReference type="Gene3D" id="2.10.109.10">
    <property type="entry name" value="Umud Fragment, subunit A"/>
    <property type="match status" value="1"/>
</dbReference>
<dbReference type="InterPro" id="IPR039418">
    <property type="entry name" value="LexA-like"/>
</dbReference>
<dbReference type="InterPro" id="IPR036286">
    <property type="entry name" value="LexA/Signal_pep-like_sf"/>
</dbReference>
<dbReference type="InterPro" id="IPR050077">
    <property type="entry name" value="LexA_repressor"/>
</dbReference>
<dbReference type="InterPro" id="IPR006197">
    <property type="entry name" value="Peptidase_S24_LexA"/>
</dbReference>
<dbReference type="InterPro" id="IPR015927">
    <property type="entry name" value="Peptidase_S24_S26A/B/C"/>
</dbReference>
<dbReference type="NCBIfam" id="NF007621">
    <property type="entry name" value="PRK10276.1"/>
    <property type="match status" value="1"/>
</dbReference>
<dbReference type="PANTHER" id="PTHR33516">
    <property type="entry name" value="LEXA REPRESSOR"/>
    <property type="match status" value="1"/>
</dbReference>
<dbReference type="PANTHER" id="PTHR33516:SF2">
    <property type="entry name" value="LEXA REPRESSOR-RELATED"/>
    <property type="match status" value="1"/>
</dbReference>
<dbReference type="Pfam" id="PF00717">
    <property type="entry name" value="Peptidase_S24"/>
    <property type="match status" value="1"/>
</dbReference>
<dbReference type="PRINTS" id="PR00726">
    <property type="entry name" value="LEXASERPTASE"/>
</dbReference>
<dbReference type="SUPFAM" id="SSF51306">
    <property type="entry name" value="LexA/Signal peptidase"/>
    <property type="match status" value="1"/>
</dbReference>
<organism>
    <name type="scientific">Shigella flexneri</name>
    <dbReference type="NCBI Taxonomy" id="623"/>
    <lineage>
        <taxon>Bacteria</taxon>
        <taxon>Pseudomonadati</taxon>
        <taxon>Pseudomonadota</taxon>
        <taxon>Gammaproteobacteria</taxon>
        <taxon>Enterobacterales</taxon>
        <taxon>Enterobacteriaceae</taxon>
        <taxon>Shigella</taxon>
    </lineage>
</organism>
<protein>
    <recommendedName>
        <fullName>Protein ImpA</fullName>
        <ecNumber>3.4.21.-</ecNumber>
    </recommendedName>
    <component>
        <recommendedName>
            <fullName>Protein ImpA'</fullName>
        </recommendedName>
    </component>
</protein>
<sequence length="145" mass="16219">MSTVYHRPADPSGDDSYVRPLFADRCQAGFPSPATDYAEQELDLNSYCISRPAATFFLRASGESMNQAGVQNGDLLVVDRAEKPQHGDIVIAEIDGEFTVKRLLLRPRPALEPVSDSPEFRTLYPENICIFGVVTHVIHRTRELR</sequence>